<feature type="chain" id="PRO_0000156187" description="Phosphopantetheine adenylyltransferase">
    <location>
        <begin position="1"/>
        <end position="166"/>
    </location>
</feature>
<feature type="binding site" evidence="1">
    <location>
        <begin position="9"/>
        <end position="10"/>
    </location>
    <ligand>
        <name>ATP</name>
        <dbReference type="ChEBI" id="CHEBI:30616"/>
    </ligand>
</feature>
<feature type="binding site" evidence="1">
    <location>
        <position position="9"/>
    </location>
    <ligand>
        <name>substrate</name>
    </ligand>
</feature>
<feature type="binding site" evidence="1">
    <location>
        <position position="17"/>
    </location>
    <ligand>
        <name>ATP</name>
        <dbReference type="ChEBI" id="CHEBI:30616"/>
    </ligand>
</feature>
<feature type="binding site" evidence="1">
    <location>
        <position position="41"/>
    </location>
    <ligand>
        <name>substrate</name>
    </ligand>
</feature>
<feature type="binding site" evidence="1">
    <location>
        <position position="73"/>
    </location>
    <ligand>
        <name>substrate</name>
    </ligand>
</feature>
<feature type="binding site" evidence="1">
    <location>
        <position position="87"/>
    </location>
    <ligand>
        <name>substrate</name>
    </ligand>
</feature>
<feature type="binding site" evidence="1">
    <location>
        <begin position="88"/>
        <end position="90"/>
    </location>
    <ligand>
        <name>ATP</name>
        <dbReference type="ChEBI" id="CHEBI:30616"/>
    </ligand>
</feature>
<feature type="binding site" evidence="1">
    <location>
        <position position="98"/>
    </location>
    <ligand>
        <name>ATP</name>
        <dbReference type="ChEBI" id="CHEBI:30616"/>
    </ligand>
</feature>
<feature type="binding site" evidence="1">
    <location>
        <begin position="123"/>
        <end position="129"/>
    </location>
    <ligand>
        <name>ATP</name>
        <dbReference type="ChEBI" id="CHEBI:30616"/>
    </ligand>
</feature>
<feature type="site" description="Transition state stabilizer" evidence="1">
    <location>
        <position position="17"/>
    </location>
</feature>
<accession>Q63XM3</accession>
<organism>
    <name type="scientific">Burkholderia pseudomallei (strain K96243)</name>
    <dbReference type="NCBI Taxonomy" id="272560"/>
    <lineage>
        <taxon>Bacteria</taxon>
        <taxon>Pseudomonadati</taxon>
        <taxon>Pseudomonadota</taxon>
        <taxon>Betaproteobacteria</taxon>
        <taxon>Burkholderiales</taxon>
        <taxon>Burkholderiaceae</taxon>
        <taxon>Burkholderia</taxon>
        <taxon>pseudomallei group</taxon>
    </lineage>
</organism>
<gene>
    <name evidence="1" type="primary">coaD</name>
    <name type="ordered locus">BPSL0516</name>
</gene>
<reference key="1">
    <citation type="journal article" date="2004" name="Proc. Natl. Acad. Sci. U.S.A.">
        <title>Genomic plasticity of the causative agent of melioidosis, Burkholderia pseudomallei.</title>
        <authorList>
            <person name="Holden M.T.G."/>
            <person name="Titball R.W."/>
            <person name="Peacock S.J."/>
            <person name="Cerdeno-Tarraga A.-M."/>
            <person name="Atkins T."/>
            <person name="Crossman L.C."/>
            <person name="Pitt T."/>
            <person name="Churcher C."/>
            <person name="Mungall K.L."/>
            <person name="Bentley S.D."/>
            <person name="Sebaihia M."/>
            <person name="Thomson N.R."/>
            <person name="Bason N."/>
            <person name="Beacham I.R."/>
            <person name="Brooks K."/>
            <person name="Brown K.A."/>
            <person name="Brown N.F."/>
            <person name="Challis G.L."/>
            <person name="Cherevach I."/>
            <person name="Chillingworth T."/>
            <person name="Cronin A."/>
            <person name="Crossett B."/>
            <person name="Davis P."/>
            <person name="DeShazer D."/>
            <person name="Feltwell T."/>
            <person name="Fraser A."/>
            <person name="Hance Z."/>
            <person name="Hauser H."/>
            <person name="Holroyd S."/>
            <person name="Jagels K."/>
            <person name="Keith K.E."/>
            <person name="Maddison M."/>
            <person name="Moule S."/>
            <person name="Price C."/>
            <person name="Quail M.A."/>
            <person name="Rabbinowitsch E."/>
            <person name="Rutherford K."/>
            <person name="Sanders M."/>
            <person name="Simmonds M."/>
            <person name="Songsivilai S."/>
            <person name="Stevens K."/>
            <person name="Tumapa S."/>
            <person name="Vesaratchavest M."/>
            <person name="Whitehead S."/>
            <person name="Yeats C."/>
            <person name="Barrell B.G."/>
            <person name="Oyston P.C.F."/>
            <person name="Parkhill J."/>
        </authorList>
    </citation>
    <scope>NUCLEOTIDE SEQUENCE [LARGE SCALE GENOMIC DNA]</scope>
    <source>
        <strain>K96243</strain>
    </source>
</reference>
<keyword id="KW-0067">ATP-binding</keyword>
<keyword id="KW-0173">Coenzyme A biosynthesis</keyword>
<keyword id="KW-0963">Cytoplasm</keyword>
<keyword id="KW-0460">Magnesium</keyword>
<keyword id="KW-0547">Nucleotide-binding</keyword>
<keyword id="KW-0548">Nucleotidyltransferase</keyword>
<keyword id="KW-1185">Reference proteome</keyword>
<keyword id="KW-0808">Transferase</keyword>
<sequence length="166" mass="18530">MVVAVYPGTFDPLTRGHEDLVRRASSIFDTLVVGVADSRAKKPFFSLEERLKIANEVLGHYPNVKVMGFTGLLKDFVRANDARVIVRGLRAVSDFEYEFQMAGMNRYLLPDVETMFMTPSDQYQFISGTIVREIAQLGGDVSKFVFPSVEKWLTEKVAAMAQGPSA</sequence>
<protein>
    <recommendedName>
        <fullName evidence="1">Phosphopantetheine adenylyltransferase</fullName>
        <ecNumber evidence="1">2.7.7.3</ecNumber>
    </recommendedName>
    <alternativeName>
        <fullName evidence="1">Dephospho-CoA pyrophosphorylase</fullName>
    </alternativeName>
    <alternativeName>
        <fullName evidence="1">Pantetheine-phosphate adenylyltransferase</fullName>
        <shortName evidence="1">PPAT</shortName>
    </alternativeName>
</protein>
<evidence type="ECO:0000255" key="1">
    <source>
        <dbReference type="HAMAP-Rule" id="MF_00151"/>
    </source>
</evidence>
<dbReference type="EC" id="2.7.7.3" evidence="1"/>
<dbReference type="EMBL" id="BX571965">
    <property type="protein sequence ID" value="CAH34506.1"/>
    <property type="molecule type" value="Genomic_DNA"/>
</dbReference>
<dbReference type="RefSeq" id="WP_004195249.1">
    <property type="nucleotide sequence ID" value="NZ_CP009538.1"/>
</dbReference>
<dbReference type="RefSeq" id="YP_107142.1">
    <property type="nucleotide sequence ID" value="NC_006350.1"/>
</dbReference>
<dbReference type="SMR" id="Q63XM3"/>
<dbReference type="STRING" id="272560.BPSL0516"/>
<dbReference type="GeneID" id="93059037"/>
<dbReference type="KEGG" id="bps:BPSL0516"/>
<dbReference type="PATRIC" id="fig|272560.51.peg.1131"/>
<dbReference type="eggNOG" id="COG0669">
    <property type="taxonomic scope" value="Bacteria"/>
</dbReference>
<dbReference type="UniPathway" id="UPA00241">
    <property type="reaction ID" value="UER00355"/>
</dbReference>
<dbReference type="Proteomes" id="UP000000605">
    <property type="component" value="Chromosome 1"/>
</dbReference>
<dbReference type="GO" id="GO:0005737">
    <property type="term" value="C:cytoplasm"/>
    <property type="evidence" value="ECO:0007669"/>
    <property type="project" value="UniProtKB-SubCell"/>
</dbReference>
<dbReference type="GO" id="GO:0005524">
    <property type="term" value="F:ATP binding"/>
    <property type="evidence" value="ECO:0007669"/>
    <property type="project" value="UniProtKB-KW"/>
</dbReference>
<dbReference type="GO" id="GO:0004595">
    <property type="term" value="F:pantetheine-phosphate adenylyltransferase activity"/>
    <property type="evidence" value="ECO:0007669"/>
    <property type="project" value="UniProtKB-UniRule"/>
</dbReference>
<dbReference type="GO" id="GO:0015937">
    <property type="term" value="P:coenzyme A biosynthetic process"/>
    <property type="evidence" value="ECO:0007669"/>
    <property type="project" value="UniProtKB-UniRule"/>
</dbReference>
<dbReference type="CDD" id="cd02163">
    <property type="entry name" value="PPAT"/>
    <property type="match status" value="1"/>
</dbReference>
<dbReference type="Gene3D" id="3.40.50.620">
    <property type="entry name" value="HUPs"/>
    <property type="match status" value="1"/>
</dbReference>
<dbReference type="HAMAP" id="MF_00151">
    <property type="entry name" value="PPAT_bact"/>
    <property type="match status" value="1"/>
</dbReference>
<dbReference type="InterPro" id="IPR004821">
    <property type="entry name" value="Cyt_trans-like"/>
</dbReference>
<dbReference type="InterPro" id="IPR001980">
    <property type="entry name" value="PPAT"/>
</dbReference>
<dbReference type="InterPro" id="IPR014729">
    <property type="entry name" value="Rossmann-like_a/b/a_fold"/>
</dbReference>
<dbReference type="NCBIfam" id="TIGR01510">
    <property type="entry name" value="coaD_prev_kdtB"/>
    <property type="match status" value="1"/>
</dbReference>
<dbReference type="NCBIfam" id="TIGR00125">
    <property type="entry name" value="cyt_tran_rel"/>
    <property type="match status" value="1"/>
</dbReference>
<dbReference type="PANTHER" id="PTHR21342">
    <property type="entry name" value="PHOSPHOPANTETHEINE ADENYLYLTRANSFERASE"/>
    <property type="match status" value="1"/>
</dbReference>
<dbReference type="PANTHER" id="PTHR21342:SF1">
    <property type="entry name" value="PHOSPHOPANTETHEINE ADENYLYLTRANSFERASE"/>
    <property type="match status" value="1"/>
</dbReference>
<dbReference type="Pfam" id="PF01467">
    <property type="entry name" value="CTP_transf_like"/>
    <property type="match status" value="1"/>
</dbReference>
<dbReference type="PRINTS" id="PR01020">
    <property type="entry name" value="LPSBIOSNTHSS"/>
</dbReference>
<dbReference type="SUPFAM" id="SSF52374">
    <property type="entry name" value="Nucleotidylyl transferase"/>
    <property type="match status" value="1"/>
</dbReference>
<proteinExistence type="inferred from homology"/>
<comment type="function">
    <text evidence="1">Reversibly transfers an adenylyl group from ATP to 4'-phosphopantetheine, yielding dephospho-CoA (dPCoA) and pyrophosphate.</text>
</comment>
<comment type="catalytic activity">
    <reaction evidence="1">
        <text>(R)-4'-phosphopantetheine + ATP + H(+) = 3'-dephospho-CoA + diphosphate</text>
        <dbReference type="Rhea" id="RHEA:19801"/>
        <dbReference type="ChEBI" id="CHEBI:15378"/>
        <dbReference type="ChEBI" id="CHEBI:30616"/>
        <dbReference type="ChEBI" id="CHEBI:33019"/>
        <dbReference type="ChEBI" id="CHEBI:57328"/>
        <dbReference type="ChEBI" id="CHEBI:61723"/>
        <dbReference type="EC" id="2.7.7.3"/>
    </reaction>
</comment>
<comment type="cofactor">
    <cofactor evidence="1">
        <name>Mg(2+)</name>
        <dbReference type="ChEBI" id="CHEBI:18420"/>
    </cofactor>
</comment>
<comment type="pathway">
    <text evidence="1">Cofactor biosynthesis; coenzyme A biosynthesis; CoA from (R)-pantothenate: step 4/5.</text>
</comment>
<comment type="subunit">
    <text evidence="1">Homohexamer.</text>
</comment>
<comment type="subcellular location">
    <subcellularLocation>
        <location evidence="1">Cytoplasm</location>
    </subcellularLocation>
</comment>
<comment type="similarity">
    <text evidence="1">Belongs to the bacterial CoaD family.</text>
</comment>
<name>COAD_BURPS</name>